<proteinExistence type="inferred from homology"/>
<comment type="function">
    <text evidence="1">Involved in the binding of tRNA to the ribosomes.</text>
</comment>
<comment type="subunit">
    <text evidence="1">Part of the 30S ribosomal subunit.</text>
</comment>
<comment type="similarity">
    <text evidence="1">Belongs to the universal ribosomal protein uS10 family.</text>
</comment>
<name>RS10_CLOBH</name>
<evidence type="ECO:0000255" key="1">
    <source>
        <dbReference type="HAMAP-Rule" id="MF_00508"/>
    </source>
</evidence>
<evidence type="ECO:0000305" key="2"/>
<gene>
    <name evidence="1" type="primary">rpsJ</name>
    <name type="ordered locus">CBO3481</name>
    <name type="ordered locus">CLC_3426</name>
</gene>
<reference key="1">
    <citation type="journal article" date="2007" name="Genome Res.">
        <title>Genome sequence of a proteolytic (Group I) Clostridium botulinum strain Hall A and comparative analysis of the clostridial genomes.</title>
        <authorList>
            <person name="Sebaihia M."/>
            <person name="Peck M.W."/>
            <person name="Minton N.P."/>
            <person name="Thomson N.R."/>
            <person name="Holden M.T.G."/>
            <person name="Mitchell W.J."/>
            <person name="Carter A.T."/>
            <person name="Bentley S.D."/>
            <person name="Mason D.R."/>
            <person name="Crossman L."/>
            <person name="Paul C.J."/>
            <person name="Ivens A."/>
            <person name="Wells-Bennik M.H.J."/>
            <person name="Davis I.J."/>
            <person name="Cerdeno-Tarraga A.M."/>
            <person name="Churcher C."/>
            <person name="Quail M.A."/>
            <person name="Chillingworth T."/>
            <person name="Feltwell T."/>
            <person name="Fraser A."/>
            <person name="Goodhead I."/>
            <person name="Hance Z."/>
            <person name="Jagels K."/>
            <person name="Larke N."/>
            <person name="Maddison M."/>
            <person name="Moule S."/>
            <person name="Mungall K."/>
            <person name="Norbertczak H."/>
            <person name="Rabbinowitsch E."/>
            <person name="Sanders M."/>
            <person name="Simmonds M."/>
            <person name="White B."/>
            <person name="Whithead S."/>
            <person name="Parkhill J."/>
        </authorList>
    </citation>
    <scope>NUCLEOTIDE SEQUENCE [LARGE SCALE GENOMIC DNA]</scope>
    <source>
        <strain>Hall / ATCC 3502 / NCTC 13319 / Type A</strain>
    </source>
</reference>
<reference key="2">
    <citation type="journal article" date="2007" name="PLoS ONE">
        <title>Analysis of the neurotoxin complex genes in Clostridium botulinum A1-A4 and B1 strains: BoNT/A3, /Ba4 and /B1 clusters are located within plasmids.</title>
        <authorList>
            <person name="Smith T.J."/>
            <person name="Hill K.K."/>
            <person name="Foley B.T."/>
            <person name="Detter J.C."/>
            <person name="Munk A.C."/>
            <person name="Bruce D.C."/>
            <person name="Doggett N.A."/>
            <person name="Smith L.A."/>
            <person name="Marks J.D."/>
            <person name="Xie G."/>
            <person name="Brettin T.S."/>
        </authorList>
    </citation>
    <scope>NUCLEOTIDE SEQUENCE [LARGE SCALE GENOMIC DNA]</scope>
    <source>
        <strain>Hall / ATCC 3502 / NCTC 13319 / Type A</strain>
    </source>
</reference>
<sequence length="102" mass="11434">MAKQKIRIRLKAFDHSLLDQSALKIVETAKTTGAKVAGPVPLPTEKDIVTILRAPHKYKDAREQFEIRTHKRLIDIISPSPKTVDALMRLDLPAGVDIEIKL</sequence>
<organism>
    <name type="scientific">Clostridium botulinum (strain Hall / ATCC 3502 / NCTC 13319 / Type A)</name>
    <dbReference type="NCBI Taxonomy" id="441771"/>
    <lineage>
        <taxon>Bacteria</taxon>
        <taxon>Bacillati</taxon>
        <taxon>Bacillota</taxon>
        <taxon>Clostridia</taxon>
        <taxon>Eubacteriales</taxon>
        <taxon>Clostridiaceae</taxon>
        <taxon>Clostridium</taxon>
    </lineage>
</organism>
<keyword id="KW-1185">Reference proteome</keyword>
<keyword id="KW-0687">Ribonucleoprotein</keyword>
<keyword id="KW-0689">Ribosomal protein</keyword>
<protein>
    <recommendedName>
        <fullName evidence="1">Small ribosomal subunit protein uS10</fullName>
    </recommendedName>
    <alternativeName>
        <fullName evidence="2">30S ribosomal protein S10</fullName>
    </alternativeName>
</protein>
<feature type="chain" id="PRO_1000015012" description="Small ribosomal subunit protein uS10">
    <location>
        <begin position="1"/>
        <end position="102"/>
    </location>
</feature>
<accession>A5I7K7</accession>
<accession>A7G8T9</accession>
<dbReference type="EMBL" id="CP000727">
    <property type="protein sequence ID" value="ABS38166.1"/>
    <property type="molecule type" value="Genomic_DNA"/>
</dbReference>
<dbReference type="EMBL" id="AM412317">
    <property type="protein sequence ID" value="CAL85042.1"/>
    <property type="molecule type" value="Genomic_DNA"/>
</dbReference>
<dbReference type="RefSeq" id="WP_003357250.1">
    <property type="nucleotide sequence ID" value="NC_009698.1"/>
</dbReference>
<dbReference type="RefSeq" id="YP_001255963.1">
    <property type="nucleotide sequence ID" value="NC_009495.1"/>
</dbReference>
<dbReference type="RefSeq" id="YP_001389204.1">
    <property type="nucleotide sequence ID" value="NC_009698.1"/>
</dbReference>
<dbReference type="SMR" id="A5I7K7"/>
<dbReference type="GeneID" id="92940251"/>
<dbReference type="KEGG" id="cbh:CLC_3426"/>
<dbReference type="KEGG" id="cbo:CBO3481"/>
<dbReference type="PATRIC" id="fig|413999.7.peg.3458"/>
<dbReference type="HOGENOM" id="CLU_122625_1_3_9"/>
<dbReference type="PRO" id="PR:A5I7K7"/>
<dbReference type="Proteomes" id="UP000001986">
    <property type="component" value="Chromosome"/>
</dbReference>
<dbReference type="GO" id="GO:0015935">
    <property type="term" value="C:small ribosomal subunit"/>
    <property type="evidence" value="ECO:0000318"/>
    <property type="project" value="GO_Central"/>
</dbReference>
<dbReference type="GO" id="GO:0003735">
    <property type="term" value="F:structural constituent of ribosome"/>
    <property type="evidence" value="ECO:0000318"/>
    <property type="project" value="GO_Central"/>
</dbReference>
<dbReference type="GO" id="GO:0000049">
    <property type="term" value="F:tRNA binding"/>
    <property type="evidence" value="ECO:0007669"/>
    <property type="project" value="UniProtKB-UniRule"/>
</dbReference>
<dbReference type="GO" id="GO:0006412">
    <property type="term" value="P:translation"/>
    <property type="evidence" value="ECO:0007669"/>
    <property type="project" value="UniProtKB-UniRule"/>
</dbReference>
<dbReference type="FunFam" id="3.30.70.600:FF:000001">
    <property type="entry name" value="30S ribosomal protein S10"/>
    <property type="match status" value="1"/>
</dbReference>
<dbReference type="Gene3D" id="3.30.70.600">
    <property type="entry name" value="Ribosomal protein S10 domain"/>
    <property type="match status" value="1"/>
</dbReference>
<dbReference type="HAMAP" id="MF_00508">
    <property type="entry name" value="Ribosomal_uS10"/>
    <property type="match status" value="1"/>
</dbReference>
<dbReference type="InterPro" id="IPR001848">
    <property type="entry name" value="Ribosomal_uS10"/>
</dbReference>
<dbReference type="InterPro" id="IPR018268">
    <property type="entry name" value="Ribosomal_uS10_CS"/>
</dbReference>
<dbReference type="InterPro" id="IPR027486">
    <property type="entry name" value="Ribosomal_uS10_dom"/>
</dbReference>
<dbReference type="InterPro" id="IPR036838">
    <property type="entry name" value="Ribosomal_uS10_dom_sf"/>
</dbReference>
<dbReference type="NCBIfam" id="NF001861">
    <property type="entry name" value="PRK00596.1"/>
    <property type="match status" value="1"/>
</dbReference>
<dbReference type="NCBIfam" id="TIGR01049">
    <property type="entry name" value="rpsJ_bact"/>
    <property type="match status" value="1"/>
</dbReference>
<dbReference type="PANTHER" id="PTHR11700">
    <property type="entry name" value="30S RIBOSOMAL PROTEIN S10 FAMILY MEMBER"/>
    <property type="match status" value="1"/>
</dbReference>
<dbReference type="Pfam" id="PF00338">
    <property type="entry name" value="Ribosomal_S10"/>
    <property type="match status" value="1"/>
</dbReference>
<dbReference type="PRINTS" id="PR00971">
    <property type="entry name" value="RIBOSOMALS10"/>
</dbReference>
<dbReference type="SMART" id="SM01403">
    <property type="entry name" value="Ribosomal_S10"/>
    <property type="match status" value="1"/>
</dbReference>
<dbReference type="SUPFAM" id="SSF54999">
    <property type="entry name" value="Ribosomal protein S10"/>
    <property type="match status" value="1"/>
</dbReference>
<dbReference type="PROSITE" id="PS00361">
    <property type="entry name" value="RIBOSOMAL_S10"/>
    <property type="match status" value="1"/>
</dbReference>